<reference key="1">
    <citation type="journal article" date="1995" name="J. Biol. Chem.">
        <title>Molecular cloning and expression of two types of rabbit beta-galactoside alpha 1,2-fucosyltransferase.</title>
        <authorList>
            <person name="Hitoshi S."/>
            <person name="Kusunoki S."/>
            <person name="Kanazawa I."/>
            <person name="Tsuji S."/>
        </authorList>
    </citation>
    <scope>NUCLEOTIDE SEQUENCE [MRNA]</scope>
    <scope>FUNCTION</scope>
    <scope>CATALYTIC ACTIVITY</scope>
    <scope>TISSUE SPECIFICITY</scope>
    <source>
        <tissue>Brain</tissue>
    </source>
</reference>
<name>FUT2_RABIT</name>
<feature type="chain" id="PRO_0000149113" description="Galactoside alpha-(1,2)-fucosyltransferase 2">
    <location>
        <begin position="1"/>
        <end position="354"/>
    </location>
</feature>
<feature type="topological domain" description="Cytoplasmic" evidence="5">
    <location>
        <begin position="1"/>
        <end position="22"/>
    </location>
</feature>
<feature type="transmembrane region" description="Helical; Signal-anchor for type II membrane protein" evidence="5">
    <location>
        <begin position="23"/>
        <end position="43"/>
    </location>
</feature>
<feature type="topological domain" description="Lumenal" evidence="5">
    <location>
        <begin position="44"/>
        <end position="354"/>
    </location>
</feature>
<feature type="glycosylation site" description="N-linked (GlcNAc...) asparagine" evidence="5">
    <location>
        <position position="197"/>
    </location>
</feature>
<feature type="glycosylation site" description="N-linked (GlcNAc...) asparagine" evidence="5">
    <location>
        <position position="291"/>
    </location>
</feature>
<feature type="glycosylation site" description="N-linked (GlcNAc...) asparagine" evidence="5">
    <location>
        <position position="317"/>
    </location>
</feature>
<sequence length="354" mass="40035">MRFAPDYVLCPPTATRRLRATHPSVSTIYFLFTIFVVSTVFHCHQRLALVPAPWAYSARVVVVPGHLPREGMWTINAMGRLGNQMGEYATLYALAKENGRPAYIPAQMHSTLAPIFRISLPVLHSSTASRVPWQNYHLNDWMEERYRHIPVPYVRLTGYPCSWTFYHHLRHEILREFTLHDHVREEAQAFLRGLRVNGSRPSTFVGVHVRRGDYVRVMPQVWKGVVADRGYLEQALDWFRAPTAPPVFVVTSNGMAWCRENIDASRGDVVFAGNGLEGSPAKDFALLTQCNHTVMTIGTFGFWAAYLTGGDTVYLANYTAPDSPFHLVFKPEAAFLPEWVGITANMGRALWSGL</sequence>
<evidence type="ECO:0000250" key="1">
    <source>
        <dbReference type="UniProtKB" id="Q10981"/>
    </source>
</evidence>
<evidence type="ECO:0000250" key="2">
    <source>
        <dbReference type="UniProtKB" id="Q10984"/>
    </source>
</evidence>
<evidence type="ECO:0000250" key="3">
    <source>
        <dbReference type="UniProtKB" id="Q28113"/>
    </source>
</evidence>
<evidence type="ECO:0000250" key="4">
    <source>
        <dbReference type="UniProtKB" id="Q9JL27"/>
    </source>
</evidence>
<evidence type="ECO:0000255" key="5"/>
<evidence type="ECO:0000269" key="6">
    <source>
    </source>
</evidence>
<evidence type="ECO:0000305" key="7"/>
<evidence type="ECO:0000305" key="8">
    <source>
    </source>
</evidence>
<accession>Q10983</accession>
<protein>
    <recommendedName>
        <fullName evidence="1">Galactoside alpha-(1,2)-fucosyltransferase 2</fullName>
    </recommendedName>
    <alternativeName>
        <fullName>Alpha(1,2)FT 2</fullName>
    </alternativeName>
    <alternativeName>
        <fullName>Fucosyltransferase 2</fullName>
    </alternativeName>
    <alternativeName>
        <fullName>GDP-L-fucose:beta-D-galactoside 2-alpha-L-fucosyltransferase 2</fullName>
    </alternativeName>
    <alternativeName>
        <fullName>Secretor blood group alpha-2-fucosyltransferase</fullName>
    </alternativeName>
    <alternativeName>
        <fullName evidence="1">Type 1 galactoside alpha-(1,2)-fucosyltransferase FUT2</fullName>
        <ecNumber evidence="4">2.4.1.69</ecNumber>
    </alternativeName>
    <alternativeName>
        <fullName evidence="1">Type 2 galactoside alpha-(1,2)-fucosyltransferase FUT2</fullName>
        <ecNumber evidence="4">2.4.1.344</ecNumber>
    </alternativeName>
</protein>
<gene>
    <name evidence="1" type="primary">FUT2</name>
    <name type="synonym">RFT-II</name>
    <name type="synonym">SEC1</name>
</gene>
<organism>
    <name type="scientific">Oryctolagus cuniculus</name>
    <name type="common">Rabbit</name>
    <dbReference type="NCBI Taxonomy" id="9986"/>
    <lineage>
        <taxon>Eukaryota</taxon>
        <taxon>Metazoa</taxon>
        <taxon>Chordata</taxon>
        <taxon>Craniata</taxon>
        <taxon>Vertebrata</taxon>
        <taxon>Euteleostomi</taxon>
        <taxon>Mammalia</taxon>
        <taxon>Eutheria</taxon>
        <taxon>Euarchontoglires</taxon>
        <taxon>Glires</taxon>
        <taxon>Lagomorpha</taxon>
        <taxon>Leporidae</taxon>
        <taxon>Oryctolagus</taxon>
    </lineage>
</organism>
<proteinExistence type="evidence at protein level"/>
<dbReference type="EC" id="2.4.1.69" evidence="4"/>
<dbReference type="EC" id="2.4.1.344" evidence="4"/>
<dbReference type="EMBL" id="X80225">
    <property type="protein sequence ID" value="CAA56512.1"/>
    <property type="molecule type" value="mRNA"/>
</dbReference>
<dbReference type="PIR" id="B56392">
    <property type="entry name" value="B56392"/>
</dbReference>
<dbReference type="RefSeq" id="NP_001075871.1">
    <property type="nucleotide sequence ID" value="NM_001082402.1"/>
</dbReference>
<dbReference type="STRING" id="9986.ENSOCUP00000018371"/>
<dbReference type="CAZy" id="GT11">
    <property type="family name" value="Glycosyltransferase Family 11"/>
</dbReference>
<dbReference type="GlyCosmos" id="Q10983">
    <property type="glycosylation" value="3 sites, No reported glycans"/>
</dbReference>
<dbReference type="PaxDb" id="9986-ENSOCUP00000021149"/>
<dbReference type="GeneID" id="100009290"/>
<dbReference type="KEGG" id="ocu:100009290"/>
<dbReference type="CTD" id="100009290"/>
<dbReference type="eggNOG" id="ENOG502S316">
    <property type="taxonomic scope" value="Eukaryota"/>
</dbReference>
<dbReference type="InParanoid" id="Q10983"/>
<dbReference type="OrthoDB" id="3226at2759"/>
<dbReference type="BRENDA" id="2.4.1.69">
    <property type="organism ID" value="1749"/>
</dbReference>
<dbReference type="UniPathway" id="UPA00378"/>
<dbReference type="Proteomes" id="UP000001811">
    <property type="component" value="Unplaced"/>
</dbReference>
<dbReference type="GO" id="GO:0032580">
    <property type="term" value="C:Golgi cisterna membrane"/>
    <property type="evidence" value="ECO:0007669"/>
    <property type="project" value="UniProtKB-SubCell"/>
</dbReference>
<dbReference type="GO" id="GO:0031127">
    <property type="term" value="F:alpha-(1,2)-fucosyltransferase activity"/>
    <property type="evidence" value="ECO:0000250"/>
    <property type="project" value="UniProtKB"/>
</dbReference>
<dbReference type="GO" id="GO:0008107">
    <property type="term" value="F:galactoside 2-alpha-L-fucosyltransferase activity"/>
    <property type="evidence" value="ECO:0007669"/>
    <property type="project" value="UniProtKB-EC"/>
</dbReference>
<dbReference type="GO" id="GO:0005975">
    <property type="term" value="P:carbohydrate metabolic process"/>
    <property type="evidence" value="ECO:0007669"/>
    <property type="project" value="InterPro"/>
</dbReference>
<dbReference type="GO" id="GO:0036065">
    <property type="term" value="P:fucosylation"/>
    <property type="evidence" value="ECO:0000250"/>
    <property type="project" value="UniProtKB"/>
</dbReference>
<dbReference type="GO" id="GO:0006664">
    <property type="term" value="P:glycolipid metabolic process"/>
    <property type="evidence" value="ECO:0000250"/>
    <property type="project" value="UniProtKB"/>
</dbReference>
<dbReference type="GO" id="GO:0006486">
    <property type="term" value="P:protein glycosylation"/>
    <property type="evidence" value="ECO:0007669"/>
    <property type="project" value="UniProtKB-UniPathway"/>
</dbReference>
<dbReference type="GO" id="GO:0030155">
    <property type="term" value="P:regulation of cell adhesion"/>
    <property type="evidence" value="ECO:0000250"/>
    <property type="project" value="UniProtKB"/>
</dbReference>
<dbReference type="GO" id="GO:0001936">
    <property type="term" value="P:regulation of endothelial cell proliferation"/>
    <property type="evidence" value="ECO:0000250"/>
    <property type="project" value="UniProtKB"/>
</dbReference>
<dbReference type="CDD" id="cd11301">
    <property type="entry name" value="Fut1_Fut2_like"/>
    <property type="match status" value="1"/>
</dbReference>
<dbReference type="InterPro" id="IPR002516">
    <property type="entry name" value="Glyco_trans_11"/>
</dbReference>
<dbReference type="PANTHER" id="PTHR11927:SF8">
    <property type="entry name" value="GALACTOSIDE 2-ALPHA-L-FUCOSYLTRANSFERASE SEC1"/>
    <property type="match status" value="1"/>
</dbReference>
<dbReference type="PANTHER" id="PTHR11927">
    <property type="entry name" value="GALACTOSIDE 2-L-FUCOSYLTRANSFERASE"/>
    <property type="match status" value="1"/>
</dbReference>
<dbReference type="Pfam" id="PF01531">
    <property type="entry name" value="Glyco_transf_11"/>
    <property type="match status" value="1"/>
</dbReference>
<comment type="function">
    <text evidence="4 6">Catalyzes the transfer of L-fucose, from a guanosine diphosphate-beta-L-fucose, to the terminal galactose on both O- and N-linked glycans chains of cell surface glycoproteins and glycolipids and the resulting epitope regulates several processes such as cell-cell interaction including host-microbe interaction, cell surface expression and cell proliferation (PubMed:7721792). Preferentially fucosylates gangliosides GA1 and GM1 in the antrum, cecum and colon and in the female reproductive organs. Fucosylated host glycoproteins or glycolipids mediate interaction with intestinal microbiota influencing its composition (By similarity). Creates a soluble precursor oligosaccharide FuC-alpha ((1,2)Galbeta-) called the H antigen which is an essential substrate for the final step in the soluble ABO blood group antigen synthesis pathway (PubMed:7721792).</text>
</comment>
<comment type="catalytic activity">
    <reaction evidence="6">
        <text>a beta-D-galactosyl-(1-&gt;3)-N-acetyl-beta-D-glucosaminyl derivative + GDP-beta-L-fucose = an alpha-L-Fuc-(1-&gt;2)-beta-D-Gal-(1-&gt;3)-beta-D-GlcNAc derivative + GDP + H(+)</text>
        <dbReference type="Rhea" id="RHEA:50664"/>
        <dbReference type="ChEBI" id="CHEBI:15378"/>
        <dbReference type="ChEBI" id="CHEBI:57273"/>
        <dbReference type="ChEBI" id="CHEBI:58189"/>
        <dbReference type="ChEBI" id="CHEBI:133506"/>
        <dbReference type="ChEBI" id="CHEBI:133509"/>
        <dbReference type="EC" id="2.4.1.69"/>
    </reaction>
    <physiologicalReaction direction="left-to-right" evidence="8">
        <dbReference type="Rhea" id="RHEA:50665"/>
    </physiologicalReaction>
</comment>
<comment type="catalytic activity">
    <reaction evidence="6">
        <text>a beta-D-galactosyl-(1-&gt;4)-N-acetyl-beta-D-glucosaminyl derivative + GDP-beta-L-fucose = an alpha-L-Fuc-(1-&gt;2)-beta-D-Gal-(1-&gt;4)-beta-D-GlcNAc derivative + GDP + H(+)</text>
        <dbReference type="Rhea" id="RHEA:50668"/>
        <dbReference type="ChEBI" id="CHEBI:15378"/>
        <dbReference type="ChEBI" id="CHEBI:57273"/>
        <dbReference type="ChEBI" id="CHEBI:58189"/>
        <dbReference type="ChEBI" id="CHEBI:133507"/>
        <dbReference type="ChEBI" id="CHEBI:133510"/>
        <dbReference type="EC" id="2.4.1.344"/>
    </reaction>
    <physiologicalReaction direction="left-to-right" evidence="8">
        <dbReference type="Rhea" id="RHEA:50669"/>
    </physiologicalReaction>
</comment>
<comment type="catalytic activity">
    <reaction evidence="4">
        <text>a neolactoside nLc4Cer + GDP-beta-L-fucose = a neolactoside IV(2)-alpha-Fuc-nLc4Cer + GDP + H(+)</text>
        <dbReference type="Rhea" id="RHEA:48800"/>
        <dbReference type="ChEBI" id="CHEBI:15378"/>
        <dbReference type="ChEBI" id="CHEBI:57273"/>
        <dbReference type="ChEBI" id="CHEBI:58189"/>
        <dbReference type="ChEBI" id="CHEBI:90376"/>
        <dbReference type="ChEBI" id="CHEBI:90803"/>
    </reaction>
    <physiologicalReaction direction="left-to-right" evidence="4">
        <dbReference type="Rhea" id="RHEA:48801"/>
    </physiologicalReaction>
</comment>
<comment type="catalytic activity">
    <reaction evidence="4">
        <text>a neolactoside nLc4Cer(d18:1(4E)) + GDP-beta-L-fucose = a neolactoside IV(2)-alpha-Fuc-nLc4Cer(d18:1(4E)) + GDP + H(+)</text>
        <dbReference type="Rhea" id="RHEA:48304"/>
        <dbReference type="ChEBI" id="CHEBI:15378"/>
        <dbReference type="ChEBI" id="CHEBI:17006"/>
        <dbReference type="ChEBI" id="CHEBI:28691"/>
        <dbReference type="ChEBI" id="CHEBI:57273"/>
        <dbReference type="ChEBI" id="CHEBI:58189"/>
    </reaction>
    <physiologicalReaction direction="left-to-right" evidence="4">
        <dbReference type="Rhea" id="RHEA:48305"/>
    </physiologicalReaction>
</comment>
<comment type="catalytic activity">
    <reaction evidence="4">
        <text>a ganglioside GM1 + GDP-beta-L-fucose = a ganglioside Fuc-GM1 + GDP + H(+)</text>
        <dbReference type="Rhea" id="RHEA:48292"/>
        <dbReference type="ChEBI" id="CHEBI:15378"/>
        <dbReference type="ChEBI" id="CHEBI:57273"/>
        <dbReference type="ChEBI" id="CHEBI:58189"/>
        <dbReference type="ChEBI" id="CHEBI:82639"/>
        <dbReference type="ChEBI" id="CHEBI:90189"/>
    </reaction>
    <physiologicalReaction direction="left-to-right" evidence="4">
        <dbReference type="Rhea" id="RHEA:48293"/>
    </physiologicalReaction>
</comment>
<comment type="catalytic activity">
    <reaction evidence="4">
        <text>a ganglioside GA1 + GDP-beta-L-fucose = a ganglioside Fuc-GA1 + GDP + H(+)</text>
        <dbReference type="Rhea" id="RHEA:48320"/>
        <dbReference type="ChEBI" id="CHEBI:15378"/>
        <dbReference type="ChEBI" id="CHEBI:57273"/>
        <dbReference type="ChEBI" id="CHEBI:58189"/>
        <dbReference type="ChEBI" id="CHEBI:88069"/>
        <dbReference type="ChEBI" id="CHEBI:90262"/>
    </reaction>
    <physiologicalReaction direction="left-to-right" evidence="4">
        <dbReference type="Rhea" id="RHEA:48321"/>
    </physiologicalReaction>
</comment>
<comment type="catalytic activity">
    <reaction evidence="4">
        <text>Lc4Cer + GDP-beta-L-fucose = alpha-L-fucosyl-(1-&gt;2)-beta-D-galactosyl-(1-&gt;3)-N-acetyl-beta-D-glucosaminyl-(1-&gt;3)-beta-D-galactosyl-(1-&gt;4)-beta-D-glucosyl-(1&lt;-&gt;1')-ceramide + GDP + H(+)</text>
        <dbReference type="Rhea" id="RHEA:48792"/>
        <dbReference type="ChEBI" id="CHEBI:15378"/>
        <dbReference type="ChEBI" id="CHEBI:57273"/>
        <dbReference type="ChEBI" id="CHEBI:58189"/>
        <dbReference type="ChEBI" id="CHEBI:90800"/>
        <dbReference type="ChEBI" id="CHEBI:90802"/>
    </reaction>
    <physiologicalReaction direction="left-to-right" evidence="4">
        <dbReference type="Rhea" id="RHEA:48793"/>
    </physiologicalReaction>
</comment>
<comment type="catalytic activity">
    <reaction evidence="4">
        <text>a beta-D-Gal-(1-&gt;3)-beta-D-GlcNAc-(1-&gt;3)-beta-D-Gal-(1-&gt;4)-beta-D-Glc-(1&lt;-&gt;1')-Cer(d18:1(4E)) + GDP-beta-L-fucose = alpha-L-fucosyl-(1-&gt;2)- beta-D-galactosyl-(1-&gt;3)-N-acetyl-beta-D-glucosaminyl-(1-&gt;3)-beta-D-galactosyl-(1-&gt;4)-beta-D-glucosyl-(1&lt;-&gt;1')-N-acylsphing-4-enine + GDP + H(+)</text>
        <dbReference type="Rhea" id="RHEA:32175"/>
        <dbReference type="ChEBI" id="CHEBI:15378"/>
        <dbReference type="ChEBI" id="CHEBI:17292"/>
        <dbReference type="ChEBI" id="CHEBI:28743"/>
        <dbReference type="ChEBI" id="CHEBI:57273"/>
        <dbReference type="ChEBI" id="CHEBI:58189"/>
        <dbReference type="EC" id="2.4.1.69"/>
    </reaction>
    <physiologicalReaction direction="left-to-right" evidence="4">
        <dbReference type="Rhea" id="RHEA:32176"/>
    </physiologicalReaction>
</comment>
<comment type="catalytic activity">
    <reaction evidence="4">
        <text>a ganglioside GD1b + GDP-beta-L-fucose = a ganglioside Fuc-GD1b + GDP + H(+)</text>
        <dbReference type="Rhea" id="RHEA:48324"/>
        <dbReference type="ChEBI" id="CHEBI:15378"/>
        <dbReference type="ChEBI" id="CHEBI:57273"/>
        <dbReference type="ChEBI" id="CHEBI:58189"/>
        <dbReference type="ChEBI" id="CHEBI:82939"/>
        <dbReference type="ChEBI" id="CHEBI:90265"/>
    </reaction>
    <physiologicalReaction direction="left-to-right" evidence="4">
        <dbReference type="Rhea" id="RHEA:48325"/>
    </physiologicalReaction>
</comment>
<comment type="catalytic activity">
    <reaction evidence="2">
        <text>a ganglioside GM1 (d18:1(4E)) + GDP-beta-L-fucose = a ganglioside Fuc-GM1 (d18:1(4E)) + GDP + H(+)</text>
        <dbReference type="Rhea" id="RHEA:42040"/>
        <dbReference type="ChEBI" id="CHEBI:15378"/>
        <dbReference type="ChEBI" id="CHEBI:57273"/>
        <dbReference type="ChEBI" id="CHEBI:58189"/>
        <dbReference type="ChEBI" id="CHEBI:77709"/>
        <dbReference type="ChEBI" id="CHEBI:78607"/>
    </reaction>
    <physiologicalReaction direction="left-to-right" evidence="2">
        <dbReference type="Rhea" id="RHEA:42041"/>
    </physiologicalReaction>
</comment>
<comment type="catalytic activity">
    <reaction evidence="2">
        <text>a globoside GalGb4Cer (d18:1(4E)) + GDP-beta-L-fucose = a globoside Globo-H (d18:1(4E)) + GDP + H(+)</text>
        <dbReference type="Rhea" id="RHEA:42044"/>
        <dbReference type="ChEBI" id="CHEBI:15378"/>
        <dbReference type="ChEBI" id="CHEBI:57273"/>
        <dbReference type="ChEBI" id="CHEBI:58189"/>
        <dbReference type="ChEBI" id="CHEBI:62571"/>
        <dbReference type="ChEBI" id="CHEBI:62649"/>
    </reaction>
    <physiologicalReaction direction="left-to-right" evidence="2">
        <dbReference type="Rhea" id="RHEA:42045"/>
    </physiologicalReaction>
</comment>
<comment type="catalytic activity">
    <reaction evidence="4">
        <text>a lactoside III(4)-a-Fuc-Lc4Cer + GDP-beta-L-fucose = a lactoside IV(2),III(4)-a-[Fuc]2-Lc4Cer + GDP + H(+)</text>
        <dbReference type="Rhea" id="RHEA:62616"/>
        <dbReference type="ChEBI" id="CHEBI:15378"/>
        <dbReference type="ChEBI" id="CHEBI:57273"/>
        <dbReference type="ChEBI" id="CHEBI:58189"/>
        <dbReference type="ChEBI" id="CHEBI:90811"/>
        <dbReference type="ChEBI" id="CHEBI:142612"/>
    </reaction>
    <physiologicalReaction direction="left-to-right" evidence="4">
        <dbReference type="Rhea" id="RHEA:62617"/>
    </physiologicalReaction>
</comment>
<comment type="catalytic activity">
    <reaction evidence="3">
        <text>beta-D-galactosyl-(1-&gt;3)-N-acetyl-D-galactosamine + GDP-beta-L-fucose = alpha-L-fucosyl-(1-&gt;2)-beta-D-galactosyl-(1-&gt;3)-N-acetyl-D-galactosamine + GDP + H(+)</text>
        <dbReference type="Rhea" id="RHEA:62964"/>
        <dbReference type="ChEBI" id="CHEBI:15378"/>
        <dbReference type="ChEBI" id="CHEBI:57273"/>
        <dbReference type="ChEBI" id="CHEBI:58189"/>
        <dbReference type="ChEBI" id="CHEBI:84728"/>
        <dbReference type="ChEBI" id="CHEBI:546807"/>
    </reaction>
    <physiologicalReaction direction="left-to-right" evidence="3">
        <dbReference type="Rhea" id="RHEA:62965"/>
    </physiologicalReaction>
</comment>
<comment type="pathway">
    <text evidence="6">Protein modification; protein glycosylation.</text>
</comment>
<comment type="subcellular location">
    <subcellularLocation>
        <location>Golgi apparatus</location>
        <location>Golgi stack membrane</location>
        <topology>Single-pass type II membrane protein</topology>
    </subcellularLocation>
    <text>Membrane-bound form in trans cisternae of Golgi.</text>
</comment>
<comment type="tissue specificity">
    <text evidence="6">Salivary and lactating mammary glands.</text>
</comment>
<comment type="miscellaneous">
    <text>There are three genes (Fut1, Fut2 and Fut3) which encode galactoside 2-L-fucosyltransferase in rabbit. They are expressed in a tissue-specific manner.</text>
</comment>
<comment type="similarity">
    <text evidence="7">Belongs to the glycosyltransferase 11 family.</text>
</comment>
<keyword id="KW-0325">Glycoprotein</keyword>
<keyword id="KW-0328">Glycosyltransferase</keyword>
<keyword id="KW-0333">Golgi apparatus</keyword>
<keyword id="KW-0443">Lipid metabolism</keyword>
<keyword id="KW-0472">Membrane</keyword>
<keyword id="KW-1185">Reference proteome</keyword>
<keyword id="KW-0735">Signal-anchor</keyword>
<keyword id="KW-0808">Transferase</keyword>
<keyword id="KW-0812">Transmembrane</keyword>
<keyword id="KW-1133">Transmembrane helix</keyword>